<proteinExistence type="inferred from homology"/>
<organism>
    <name type="scientific">Escherichia fergusonii (strain ATCC 35469 / DSM 13698 / CCUG 18766 / IAM 14443 / JCM 21226 / LMG 7866 / NBRC 102419 / NCTC 12128 / CDC 0568-73)</name>
    <dbReference type="NCBI Taxonomy" id="585054"/>
    <lineage>
        <taxon>Bacteria</taxon>
        <taxon>Pseudomonadati</taxon>
        <taxon>Pseudomonadota</taxon>
        <taxon>Gammaproteobacteria</taxon>
        <taxon>Enterobacterales</taxon>
        <taxon>Enterobacteriaceae</taxon>
        <taxon>Escherichia</taxon>
    </lineage>
</organism>
<protein>
    <recommendedName>
        <fullName evidence="1">HTH-type transcriptional regulator ArgP</fullName>
    </recommendedName>
</protein>
<sequence length="297" mass="33395">MKRPDYRTLQALDAVIRERGFERAAQKLCITQSAVSQRIKQLENMFGQPLLVRTVPPRPTEQGQKLLALLRQVELLEEEWLGDEQTGSTPLLLSLAVNADSLATWLLPALAPVLADSPIRLNLQVEDETRTQERLRRGEVVGAVSIQPQALPSCLVDKLGALDYLFVSSKPFAEKYFPNGVTRAALLKAPVVAFDHLDDMHQAFLQQNFDLPPGSVPCHIVNSSEAFVQLARQGTTCCMIPHLQIEKELASGELINLTPGLLQRRMLYWHRFAPESRMMRKVTDALLEYGHKVLRQD</sequence>
<keyword id="KW-0238">DNA-binding</keyword>
<keyword id="KW-0804">Transcription</keyword>
<keyword id="KW-0805">Transcription regulation</keyword>
<accession>B7LPC9</accession>
<comment type="function">
    <text evidence="1">Controls the transcription of genes involved in arginine and lysine metabolism.</text>
</comment>
<comment type="subunit">
    <text evidence="1">Homodimer.</text>
</comment>
<comment type="similarity">
    <text evidence="2">Belongs to the LysR transcriptional regulatory family.</text>
</comment>
<feature type="chain" id="PRO_1000127275" description="HTH-type transcriptional regulator ArgP">
    <location>
        <begin position="1"/>
        <end position="297"/>
    </location>
</feature>
<feature type="domain" description="HTH lysR-type" evidence="1">
    <location>
        <begin position="4"/>
        <end position="60"/>
    </location>
</feature>
<feature type="DNA-binding region" description="H-T-H motif" evidence="1">
    <location>
        <begin position="21"/>
        <end position="40"/>
    </location>
</feature>
<dbReference type="EMBL" id="CU928158">
    <property type="protein sequence ID" value="CAQ90346.1"/>
    <property type="molecule type" value="Genomic_DNA"/>
</dbReference>
<dbReference type="RefSeq" id="WP_000828353.1">
    <property type="nucleotide sequence ID" value="NC_011740.1"/>
</dbReference>
<dbReference type="SMR" id="B7LPC9"/>
<dbReference type="GeneID" id="75060527"/>
<dbReference type="KEGG" id="efe:EFER_2853"/>
<dbReference type="HOGENOM" id="CLU_063829_0_0_6"/>
<dbReference type="OrthoDB" id="3252676at2"/>
<dbReference type="Proteomes" id="UP000000745">
    <property type="component" value="Chromosome"/>
</dbReference>
<dbReference type="GO" id="GO:0003677">
    <property type="term" value="F:DNA binding"/>
    <property type="evidence" value="ECO:0007669"/>
    <property type="project" value="UniProtKB-UniRule"/>
</dbReference>
<dbReference type="GO" id="GO:0003700">
    <property type="term" value="F:DNA-binding transcription factor activity"/>
    <property type="evidence" value="ECO:0007669"/>
    <property type="project" value="UniProtKB-UniRule"/>
</dbReference>
<dbReference type="CDD" id="cd08428">
    <property type="entry name" value="PBP2_IciA_ArgP"/>
    <property type="match status" value="1"/>
</dbReference>
<dbReference type="FunFam" id="1.10.10.10:FF:000061">
    <property type="entry name" value="HTH-type transcriptional regulator ArgP"/>
    <property type="match status" value="1"/>
</dbReference>
<dbReference type="FunFam" id="3.40.190.290:FF:000002">
    <property type="entry name" value="HTH-type transcriptional regulator ArgP"/>
    <property type="match status" value="1"/>
</dbReference>
<dbReference type="Gene3D" id="3.40.190.290">
    <property type="match status" value="1"/>
</dbReference>
<dbReference type="Gene3D" id="1.10.10.10">
    <property type="entry name" value="Winged helix-like DNA-binding domain superfamily/Winged helix DNA-binding domain"/>
    <property type="match status" value="1"/>
</dbReference>
<dbReference type="HAMAP" id="MF_00513">
    <property type="entry name" value="HTH_type_ArgP"/>
    <property type="match status" value="1"/>
</dbReference>
<dbReference type="InterPro" id="IPR017685">
    <property type="entry name" value="ArgP"/>
</dbReference>
<dbReference type="InterPro" id="IPR023490">
    <property type="entry name" value="ArgP_gammaproteobact"/>
</dbReference>
<dbReference type="InterPro" id="IPR050176">
    <property type="entry name" value="LTTR"/>
</dbReference>
<dbReference type="InterPro" id="IPR005119">
    <property type="entry name" value="LysR_subst-bd"/>
</dbReference>
<dbReference type="InterPro" id="IPR000847">
    <property type="entry name" value="Tscrpt_reg_HTH_LysR"/>
</dbReference>
<dbReference type="InterPro" id="IPR036388">
    <property type="entry name" value="WH-like_DNA-bd_sf"/>
</dbReference>
<dbReference type="InterPro" id="IPR036390">
    <property type="entry name" value="WH_DNA-bd_sf"/>
</dbReference>
<dbReference type="NCBIfam" id="TIGR03298">
    <property type="entry name" value="argP"/>
    <property type="match status" value="1"/>
</dbReference>
<dbReference type="NCBIfam" id="NF002964">
    <property type="entry name" value="PRK03635.1"/>
    <property type="match status" value="1"/>
</dbReference>
<dbReference type="NCBIfam" id="NF009888">
    <property type="entry name" value="PRK13348.1"/>
    <property type="match status" value="1"/>
</dbReference>
<dbReference type="PANTHER" id="PTHR30579:SF2">
    <property type="entry name" value="HTH-TYPE TRANSCRIPTIONAL REGULATOR ARGP"/>
    <property type="match status" value="1"/>
</dbReference>
<dbReference type="PANTHER" id="PTHR30579">
    <property type="entry name" value="TRANSCRIPTIONAL REGULATOR"/>
    <property type="match status" value="1"/>
</dbReference>
<dbReference type="Pfam" id="PF00126">
    <property type="entry name" value="HTH_1"/>
    <property type="match status" value="1"/>
</dbReference>
<dbReference type="Pfam" id="PF03466">
    <property type="entry name" value="LysR_substrate"/>
    <property type="match status" value="1"/>
</dbReference>
<dbReference type="PRINTS" id="PR00039">
    <property type="entry name" value="HTHLYSR"/>
</dbReference>
<dbReference type="SUPFAM" id="SSF53850">
    <property type="entry name" value="Periplasmic binding protein-like II"/>
    <property type="match status" value="1"/>
</dbReference>
<dbReference type="SUPFAM" id="SSF46785">
    <property type="entry name" value="Winged helix' DNA-binding domain"/>
    <property type="match status" value="1"/>
</dbReference>
<dbReference type="PROSITE" id="PS50931">
    <property type="entry name" value="HTH_LYSR"/>
    <property type="match status" value="1"/>
</dbReference>
<reference key="1">
    <citation type="journal article" date="2009" name="PLoS Genet.">
        <title>Organised genome dynamics in the Escherichia coli species results in highly diverse adaptive paths.</title>
        <authorList>
            <person name="Touchon M."/>
            <person name="Hoede C."/>
            <person name="Tenaillon O."/>
            <person name="Barbe V."/>
            <person name="Baeriswyl S."/>
            <person name="Bidet P."/>
            <person name="Bingen E."/>
            <person name="Bonacorsi S."/>
            <person name="Bouchier C."/>
            <person name="Bouvet O."/>
            <person name="Calteau A."/>
            <person name="Chiapello H."/>
            <person name="Clermont O."/>
            <person name="Cruveiller S."/>
            <person name="Danchin A."/>
            <person name="Diard M."/>
            <person name="Dossat C."/>
            <person name="Karoui M.E."/>
            <person name="Frapy E."/>
            <person name="Garry L."/>
            <person name="Ghigo J.M."/>
            <person name="Gilles A.M."/>
            <person name="Johnson J."/>
            <person name="Le Bouguenec C."/>
            <person name="Lescat M."/>
            <person name="Mangenot S."/>
            <person name="Martinez-Jehanne V."/>
            <person name="Matic I."/>
            <person name="Nassif X."/>
            <person name="Oztas S."/>
            <person name="Petit M.A."/>
            <person name="Pichon C."/>
            <person name="Rouy Z."/>
            <person name="Ruf C.S."/>
            <person name="Schneider D."/>
            <person name="Tourret J."/>
            <person name="Vacherie B."/>
            <person name="Vallenet D."/>
            <person name="Medigue C."/>
            <person name="Rocha E.P.C."/>
            <person name="Denamur E."/>
        </authorList>
    </citation>
    <scope>NUCLEOTIDE SEQUENCE [LARGE SCALE GENOMIC DNA]</scope>
    <source>
        <strain>ATCC 35469 / DSM 13698 / BCRC 15582 / CCUG 18766 / IAM 14443 / JCM 21226 / LMG 7866 / NBRC 102419 / NCTC 12128 / CDC 0568-73</strain>
    </source>
</reference>
<gene>
    <name evidence="1" type="primary">argP</name>
    <name type="synonym">iciA</name>
    <name type="ordered locus">EFER_2853</name>
</gene>
<name>ARGP_ESCF3</name>
<evidence type="ECO:0000255" key="1">
    <source>
        <dbReference type="HAMAP-Rule" id="MF_00513"/>
    </source>
</evidence>
<evidence type="ECO:0000305" key="2"/>